<evidence type="ECO:0000255" key="1">
    <source>
        <dbReference type="HAMAP-Rule" id="MF_00104"/>
    </source>
</evidence>
<organism>
    <name type="scientific">Streptococcus pyogenes serotype M2 (strain MGAS10270)</name>
    <dbReference type="NCBI Taxonomy" id="370552"/>
    <lineage>
        <taxon>Bacteria</taxon>
        <taxon>Bacillati</taxon>
        <taxon>Bacillota</taxon>
        <taxon>Bacilli</taxon>
        <taxon>Lactobacillales</taxon>
        <taxon>Streptococcaceae</taxon>
        <taxon>Streptococcus</taxon>
    </lineage>
</organism>
<accession>Q1JI19</accession>
<feature type="chain" id="PRO_1000075837" description="Ribonuclease 3">
    <location>
        <begin position="1"/>
        <end position="230"/>
    </location>
</feature>
<feature type="domain" description="RNase III" evidence="1">
    <location>
        <begin position="1"/>
        <end position="134"/>
    </location>
</feature>
<feature type="domain" description="DRBM" evidence="1">
    <location>
        <begin position="160"/>
        <end position="229"/>
    </location>
</feature>
<feature type="active site" evidence="1">
    <location>
        <position position="51"/>
    </location>
</feature>
<feature type="active site" evidence="1">
    <location>
        <position position="123"/>
    </location>
</feature>
<feature type="binding site" evidence="1">
    <location>
        <position position="47"/>
    </location>
    <ligand>
        <name>Mg(2+)</name>
        <dbReference type="ChEBI" id="CHEBI:18420"/>
    </ligand>
</feature>
<feature type="binding site" evidence="1">
    <location>
        <position position="120"/>
    </location>
    <ligand>
        <name>Mg(2+)</name>
        <dbReference type="ChEBI" id="CHEBI:18420"/>
    </ligand>
</feature>
<feature type="binding site" evidence="1">
    <location>
        <position position="123"/>
    </location>
    <ligand>
        <name>Mg(2+)</name>
        <dbReference type="ChEBI" id="CHEBI:18420"/>
    </ligand>
</feature>
<sequence length="230" mass="25846">MKQLEELLSTSFDIQFNDLTLLETAFTHTSYANEHRLLNVSHNERLEFLGDAVLQLIISEYLFAKYPKKTEGDMSKLRSMIVREESLAGFSRFCSFDAYIKLGKGEEKSGGRRRDTILGDLFEAFLGALLLDKGIDAVRRFLKQVMIPQVEKGNFERVKDYKTCLQEFLQAKGDVVIDYQVISEKGPAHAKQFEVSIVVNGAVLSKGLGKSKKLAEQDAAKNALAQLSEV</sequence>
<name>RNC_STRPD</name>
<gene>
    <name evidence="1" type="primary">rnc</name>
    <name type="ordered locus">MGAS10270_Spy0439</name>
</gene>
<protein>
    <recommendedName>
        <fullName evidence="1">Ribonuclease 3</fullName>
        <ecNumber evidence="1">3.1.26.3</ecNumber>
    </recommendedName>
    <alternativeName>
        <fullName evidence="1">Ribonuclease III</fullName>
        <shortName evidence="1">RNase III</shortName>
    </alternativeName>
</protein>
<reference key="1">
    <citation type="journal article" date="2006" name="Proc. Natl. Acad. Sci. U.S.A.">
        <title>Molecular genetic anatomy of inter- and intraserotype variation in the human bacterial pathogen group A Streptococcus.</title>
        <authorList>
            <person name="Beres S.B."/>
            <person name="Richter E.W."/>
            <person name="Nagiec M.J."/>
            <person name="Sumby P."/>
            <person name="Porcella S.F."/>
            <person name="DeLeo F.R."/>
            <person name="Musser J.M."/>
        </authorList>
    </citation>
    <scope>NUCLEOTIDE SEQUENCE [LARGE SCALE GENOMIC DNA]</scope>
    <source>
        <strain>MGAS10270</strain>
    </source>
</reference>
<comment type="function">
    <text evidence="1">Digests double-stranded RNA. Involved in the processing of primary rRNA transcript to yield the immediate precursors to the large and small rRNAs (23S and 16S). Processes some mRNAs, and tRNAs when they are encoded in the rRNA operon. Processes pre-crRNA and tracrRNA of type II CRISPR loci if present in the organism.</text>
</comment>
<comment type="catalytic activity">
    <reaction evidence="1">
        <text>Endonucleolytic cleavage to 5'-phosphomonoester.</text>
        <dbReference type="EC" id="3.1.26.3"/>
    </reaction>
</comment>
<comment type="cofactor">
    <cofactor evidence="1">
        <name>Mg(2+)</name>
        <dbReference type="ChEBI" id="CHEBI:18420"/>
    </cofactor>
</comment>
<comment type="subunit">
    <text evidence="1">Homodimer.</text>
</comment>
<comment type="subcellular location">
    <subcellularLocation>
        <location evidence="1">Cytoplasm</location>
    </subcellularLocation>
</comment>
<comment type="similarity">
    <text evidence="1">Belongs to the ribonuclease III family.</text>
</comment>
<dbReference type="EC" id="3.1.26.3" evidence="1"/>
<dbReference type="EMBL" id="CP000260">
    <property type="protein sequence ID" value="ABF33504.1"/>
    <property type="molecule type" value="Genomic_DNA"/>
</dbReference>
<dbReference type="SMR" id="Q1JI19"/>
<dbReference type="KEGG" id="sph:MGAS10270_Spy0439"/>
<dbReference type="HOGENOM" id="CLU_000907_1_3_9"/>
<dbReference type="Proteomes" id="UP000002436">
    <property type="component" value="Chromosome"/>
</dbReference>
<dbReference type="GO" id="GO:0005737">
    <property type="term" value="C:cytoplasm"/>
    <property type="evidence" value="ECO:0007669"/>
    <property type="project" value="UniProtKB-SubCell"/>
</dbReference>
<dbReference type="GO" id="GO:0003725">
    <property type="term" value="F:double-stranded RNA binding"/>
    <property type="evidence" value="ECO:0007669"/>
    <property type="project" value="TreeGrafter"/>
</dbReference>
<dbReference type="GO" id="GO:0046872">
    <property type="term" value="F:metal ion binding"/>
    <property type="evidence" value="ECO:0007669"/>
    <property type="project" value="UniProtKB-KW"/>
</dbReference>
<dbReference type="GO" id="GO:0004525">
    <property type="term" value="F:ribonuclease III activity"/>
    <property type="evidence" value="ECO:0007669"/>
    <property type="project" value="UniProtKB-UniRule"/>
</dbReference>
<dbReference type="GO" id="GO:0019843">
    <property type="term" value="F:rRNA binding"/>
    <property type="evidence" value="ECO:0007669"/>
    <property type="project" value="UniProtKB-KW"/>
</dbReference>
<dbReference type="GO" id="GO:0006397">
    <property type="term" value="P:mRNA processing"/>
    <property type="evidence" value="ECO:0007669"/>
    <property type="project" value="UniProtKB-UniRule"/>
</dbReference>
<dbReference type="GO" id="GO:0010468">
    <property type="term" value="P:regulation of gene expression"/>
    <property type="evidence" value="ECO:0007669"/>
    <property type="project" value="TreeGrafter"/>
</dbReference>
<dbReference type="GO" id="GO:0006364">
    <property type="term" value="P:rRNA processing"/>
    <property type="evidence" value="ECO:0007669"/>
    <property type="project" value="UniProtKB-UniRule"/>
</dbReference>
<dbReference type="GO" id="GO:0008033">
    <property type="term" value="P:tRNA processing"/>
    <property type="evidence" value="ECO:0007669"/>
    <property type="project" value="UniProtKB-KW"/>
</dbReference>
<dbReference type="CDD" id="cd10845">
    <property type="entry name" value="DSRM_RNAse_III_family"/>
    <property type="match status" value="1"/>
</dbReference>
<dbReference type="CDD" id="cd00593">
    <property type="entry name" value="RIBOc"/>
    <property type="match status" value="1"/>
</dbReference>
<dbReference type="FunFam" id="1.10.1520.10:FF:000001">
    <property type="entry name" value="Ribonuclease 3"/>
    <property type="match status" value="1"/>
</dbReference>
<dbReference type="FunFam" id="3.30.160.20:FF:000003">
    <property type="entry name" value="Ribonuclease 3"/>
    <property type="match status" value="1"/>
</dbReference>
<dbReference type="Gene3D" id="3.30.160.20">
    <property type="match status" value="1"/>
</dbReference>
<dbReference type="Gene3D" id="1.10.1520.10">
    <property type="entry name" value="Ribonuclease III domain"/>
    <property type="match status" value="1"/>
</dbReference>
<dbReference type="HAMAP" id="MF_00104">
    <property type="entry name" value="RNase_III"/>
    <property type="match status" value="1"/>
</dbReference>
<dbReference type="InterPro" id="IPR014720">
    <property type="entry name" value="dsRBD_dom"/>
</dbReference>
<dbReference type="InterPro" id="IPR011907">
    <property type="entry name" value="RNase_III"/>
</dbReference>
<dbReference type="InterPro" id="IPR000999">
    <property type="entry name" value="RNase_III_dom"/>
</dbReference>
<dbReference type="InterPro" id="IPR036389">
    <property type="entry name" value="RNase_III_sf"/>
</dbReference>
<dbReference type="NCBIfam" id="TIGR02191">
    <property type="entry name" value="RNaseIII"/>
    <property type="match status" value="1"/>
</dbReference>
<dbReference type="PANTHER" id="PTHR11207:SF0">
    <property type="entry name" value="RIBONUCLEASE 3"/>
    <property type="match status" value="1"/>
</dbReference>
<dbReference type="PANTHER" id="PTHR11207">
    <property type="entry name" value="RIBONUCLEASE III"/>
    <property type="match status" value="1"/>
</dbReference>
<dbReference type="Pfam" id="PF00035">
    <property type="entry name" value="dsrm"/>
    <property type="match status" value="1"/>
</dbReference>
<dbReference type="Pfam" id="PF14622">
    <property type="entry name" value="Ribonucleas_3_3"/>
    <property type="match status" value="1"/>
</dbReference>
<dbReference type="SMART" id="SM00358">
    <property type="entry name" value="DSRM"/>
    <property type="match status" value="1"/>
</dbReference>
<dbReference type="SMART" id="SM00535">
    <property type="entry name" value="RIBOc"/>
    <property type="match status" value="1"/>
</dbReference>
<dbReference type="SUPFAM" id="SSF54768">
    <property type="entry name" value="dsRNA-binding domain-like"/>
    <property type="match status" value="1"/>
</dbReference>
<dbReference type="SUPFAM" id="SSF69065">
    <property type="entry name" value="RNase III domain-like"/>
    <property type="match status" value="1"/>
</dbReference>
<dbReference type="PROSITE" id="PS50137">
    <property type="entry name" value="DS_RBD"/>
    <property type="match status" value="1"/>
</dbReference>
<dbReference type="PROSITE" id="PS00517">
    <property type="entry name" value="RNASE_3_1"/>
    <property type="match status" value="1"/>
</dbReference>
<dbReference type="PROSITE" id="PS50142">
    <property type="entry name" value="RNASE_3_2"/>
    <property type="match status" value="1"/>
</dbReference>
<proteinExistence type="inferred from homology"/>
<keyword id="KW-0963">Cytoplasm</keyword>
<keyword id="KW-0255">Endonuclease</keyword>
<keyword id="KW-0378">Hydrolase</keyword>
<keyword id="KW-0460">Magnesium</keyword>
<keyword id="KW-0479">Metal-binding</keyword>
<keyword id="KW-0507">mRNA processing</keyword>
<keyword id="KW-0540">Nuclease</keyword>
<keyword id="KW-0694">RNA-binding</keyword>
<keyword id="KW-0698">rRNA processing</keyword>
<keyword id="KW-0699">rRNA-binding</keyword>
<keyword id="KW-0819">tRNA processing</keyword>